<dbReference type="EMBL" id="U89874">
    <property type="protein sequence ID" value="AAB49491.1"/>
    <property type="molecule type" value="mRNA"/>
</dbReference>
<dbReference type="EMBL" id="Z50743">
    <property type="protein sequence ID" value="CAA90620.1"/>
    <property type="molecule type" value="mRNA"/>
</dbReference>
<dbReference type="PIR" id="S58313">
    <property type="entry name" value="S58313"/>
</dbReference>
<dbReference type="SMR" id="P79368"/>
<dbReference type="STRING" id="9940.ENSOARP00000016728"/>
<dbReference type="GlyCosmos" id="P79368">
    <property type="glycosylation" value="4 sites, No reported glycans"/>
</dbReference>
<dbReference type="PaxDb" id="9940-ENSOARP00000016728"/>
<dbReference type="eggNOG" id="ENOG502QTGT">
    <property type="taxonomic scope" value="Eukaryota"/>
</dbReference>
<dbReference type="Proteomes" id="UP000002356">
    <property type="component" value="Unplaced"/>
</dbReference>
<dbReference type="GO" id="GO:0005737">
    <property type="term" value="C:cytoplasm"/>
    <property type="evidence" value="ECO:0000250"/>
    <property type="project" value="UniProtKB"/>
</dbReference>
<dbReference type="GO" id="GO:0005856">
    <property type="term" value="C:cytoskeleton"/>
    <property type="evidence" value="ECO:0007669"/>
    <property type="project" value="UniProtKB-SubCell"/>
</dbReference>
<dbReference type="GO" id="GO:0005576">
    <property type="term" value="C:extracellular region"/>
    <property type="evidence" value="ECO:0007669"/>
    <property type="project" value="UniProtKB-SubCell"/>
</dbReference>
<dbReference type="GO" id="GO:0030175">
    <property type="term" value="C:filopodium"/>
    <property type="evidence" value="ECO:0000250"/>
    <property type="project" value="UniProtKB"/>
</dbReference>
<dbReference type="GO" id="GO:0030027">
    <property type="term" value="C:lamellipodium"/>
    <property type="evidence" value="ECO:0000250"/>
    <property type="project" value="UniProtKB"/>
</dbReference>
<dbReference type="GO" id="GO:0005886">
    <property type="term" value="C:plasma membrane"/>
    <property type="evidence" value="ECO:0000250"/>
    <property type="project" value="UniProtKB"/>
</dbReference>
<dbReference type="GO" id="GO:0005125">
    <property type="term" value="F:cytokine activity"/>
    <property type="evidence" value="ECO:0007669"/>
    <property type="project" value="TreeGrafter"/>
</dbReference>
<dbReference type="GO" id="GO:0008083">
    <property type="term" value="F:growth factor activity"/>
    <property type="evidence" value="ECO:0007669"/>
    <property type="project" value="UniProtKB-KW"/>
</dbReference>
<dbReference type="GO" id="GO:0005173">
    <property type="term" value="F:stem cell factor receptor binding"/>
    <property type="evidence" value="ECO:0007669"/>
    <property type="project" value="InterPro"/>
</dbReference>
<dbReference type="GO" id="GO:0007155">
    <property type="term" value="P:cell adhesion"/>
    <property type="evidence" value="ECO:0007669"/>
    <property type="project" value="UniProtKB-KW"/>
</dbReference>
<dbReference type="GO" id="GO:0008284">
    <property type="term" value="P:positive regulation of cell population proliferation"/>
    <property type="evidence" value="ECO:0007669"/>
    <property type="project" value="TreeGrafter"/>
</dbReference>
<dbReference type="FunFam" id="1.20.1250.10:FF:000004">
    <property type="entry name" value="Kit ligand"/>
    <property type="match status" value="1"/>
</dbReference>
<dbReference type="Gene3D" id="1.20.1250.10">
    <property type="match status" value="1"/>
</dbReference>
<dbReference type="InterPro" id="IPR009079">
    <property type="entry name" value="4_helix_cytokine-like_core"/>
</dbReference>
<dbReference type="InterPro" id="IPR003452">
    <property type="entry name" value="SCF"/>
</dbReference>
<dbReference type="PANTHER" id="PTHR11574">
    <property type="entry name" value="KIT LIGAND"/>
    <property type="match status" value="1"/>
</dbReference>
<dbReference type="PANTHER" id="PTHR11574:SF0">
    <property type="entry name" value="KIT LIGAND"/>
    <property type="match status" value="1"/>
</dbReference>
<dbReference type="Pfam" id="PF02404">
    <property type="entry name" value="SCF"/>
    <property type="match status" value="1"/>
</dbReference>
<dbReference type="PIRSF" id="PIRSF015599">
    <property type="entry name" value="SCF"/>
    <property type="match status" value="1"/>
</dbReference>
<dbReference type="SUPFAM" id="SSF47266">
    <property type="entry name" value="4-helical cytokines"/>
    <property type="match status" value="1"/>
</dbReference>
<accession>P79368</accession>
<accession>Q28591</accession>
<organism>
    <name type="scientific">Ovis aries</name>
    <name type="common">Sheep</name>
    <dbReference type="NCBI Taxonomy" id="9940"/>
    <lineage>
        <taxon>Eukaryota</taxon>
        <taxon>Metazoa</taxon>
        <taxon>Chordata</taxon>
        <taxon>Craniata</taxon>
        <taxon>Vertebrata</taxon>
        <taxon>Euteleostomi</taxon>
        <taxon>Mammalia</taxon>
        <taxon>Eutheria</taxon>
        <taxon>Laurasiatheria</taxon>
        <taxon>Artiodactyla</taxon>
        <taxon>Ruminantia</taxon>
        <taxon>Pecora</taxon>
        <taxon>Bovidae</taxon>
        <taxon>Caprinae</taxon>
        <taxon>Ovis</taxon>
    </lineage>
</organism>
<sequence>MKKTQTWIITCIYLQLLLFNPLVHTQGICRNRVTDDVKDVTKLVANLPKDYMITLKYVPGMDVLPSHCWISEMVEQLSVSLTDLLDKFSNISEGLSNYSIIDKLVKIVDDLVECMEEHSFENVKKSSKSPEPRQFTPEKFFGIFNKSIDAFKDLEIVASTMSECVISSTSSPEKDSRVSVTKPFMLPPVAASSLRNDSSSSNRKASNSIEDSSLQWAAVALPAFFSLVIGFAFGALYWKKKQPNLTRTVENRQINEEDNEISMLQEK</sequence>
<feature type="signal peptide" evidence="4">
    <location>
        <begin position="1"/>
        <end position="25"/>
    </location>
</feature>
<feature type="chain" id="PRO_0000031918" description="Kit ligand">
    <location>
        <begin position="26"/>
        <end position="267" status="greater than"/>
    </location>
</feature>
<feature type="chain" id="PRO_0000292278" description="Soluble KIT ligand">
    <location>
        <begin position="26"/>
        <end position="191"/>
    </location>
</feature>
<feature type="topological domain" description="Extracellular" evidence="4">
    <location>
        <begin position="26"/>
        <end position="215"/>
    </location>
</feature>
<feature type="transmembrane region" description="Helical" evidence="4">
    <location>
        <begin position="216"/>
        <end position="238"/>
    </location>
</feature>
<feature type="topological domain" description="Cytoplasmic" evidence="4">
    <location>
        <begin position="239"/>
        <end position="267" status="greater than"/>
    </location>
</feature>
<feature type="modified residue" description="Pyrrolidone carboxylic acid" evidence="2">
    <location>
        <position position="26"/>
    </location>
</feature>
<feature type="glycosylation site" description="N-linked (GlcNAc...) asparagine" evidence="4">
    <location>
        <position position="90"/>
    </location>
</feature>
<feature type="glycosylation site" description="N-linked (GlcNAc...) asparagine" evidence="4">
    <location>
        <position position="97"/>
    </location>
</feature>
<feature type="glycosylation site" description="N-linked (GlcNAc...) asparagine" evidence="4">
    <location>
        <position position="145"/>
    </location>
</feature>
<feature type="glycosylation site" description="N-linked (GlcNAc...) asparagine" evidence="4">
    <location>
        <position position="196"/>
    </location>
</feature>
<feature type="disulfide bond" evidence="1">
    <location>
        <begin position="29"/>
        <end position="114"/>
    </location>
</feature>
<feature type="disulfide bond" evidence="1">
    <location>
        <begin position="68"/>
        <end position="164"/>
    </location>
</feature>
<feature type="non-terminal residue">
    <location>
        <position position="267"/>
    </location>
</feature>
<protein>
    <recommendedName>
        <fullName>Kit ligand</fullName>
    </recommendedName>
    <alternativeName>
        <fullName>Mast cell growth factor</fullName>
        <shortName>MGF</shortName>
    </alternativeName>
    <alternativeName>
        <fullName>Stem cell factor</fullName>
        <shortName>SCF</shortName>
    </alternativeName>
    <alternativeName>
        <fullName>c-Kit ligand</fullName>
    </alternativeName>
    <component>
        <recommendedName>
            <fullName>Soluble KIT ligand</fullName>
            <shortName>sKITLG</shortName>
        </recommendedName>
    </component>
</protein>
<comment type="function">
    <text evidence="1">Ligand for the receptor-type protein-tyrosine kinase KIT. Plays an essential role in the regulation of cell survival and proliferation, hematopoiesis, stem cell maintenance, gametogenesis, mast cell development, migration and function, and in melanogenesis. KITLG/SCF binding can activate several signaling pathways. Promotes phosphorylation of PIK3R1, the regulatory subunit of phosphatidylinositol 3-kinase, and subsequent activation of the kinase AKT1. KITLG/SCF and KIT also transmit signals via GRB2 and activation of RAS, RAF1 and the MAP kinases MAPK1/ERK2 and/or MAPK3/ERK1. KITLG/SCF and KIT promote activation of STAT family members STAT1, STAT3 and STAT5. KITLG/SCF and KIT promote activation of PLCG1, leading to the production of the cellular signaling molecules diacylglycerol and inositol 1,4,5-trisphosphate. KITLG/SCF acts synergistically with other cytokines, probably interleukins (By similarity).</text>
</comment>
<comment type="subunit">
    <text evidence="1 5">Homodimer, non-covalently linked (Probable). Heterotetramer with KIT, binding two KIT molecules; thereby mediates KIT dimerization and subsequent activation by autophosphorylation (By similarity).</text>
</comment>
<comment type="subcellular location">
    <subcellularLocation>
        <location evidence="3">Cytoplasm</location>
    </subcellularLocation>
    <subcellularLocation>
        <location evidence="1">Cytoplasm</location>
        <location evidence="1">Cytoskeleton</location>
    </subcellularLocation>
    <subcellularLocation>
        <location evidence="3">Cell membrane</location>
        <topology evidence="1">Single-pass type I membrane protein</topology>
    </subcellularLocation>
    <subcellularLocation>
        <location evidence="3">Cell projection</location>
        <location evidence="3">Lamellipodium</location>
    </subcellularLocation>
    <subcellularLocation>
        <location evidence="3">Cell projection</location>
        <location evidence="3">Filopodium</location>
    </subcellularLocation>
</comment>
<comment type="subcellular location">
    <molecule>Soluble KIT ligand</molecule>
    <subcellularLocation>
        <location evidence="1">Secreted</location>
    </subcellularLocation>
</comment>
<comment type="PTM">
    <text evidence="1">A soluble form is produced by proteolytic processing of the extracellular domain.</text>
</comment>
<comment type="similarity">
    <text evidence="5">Belongs to the SCF family.</text>
</comment>
<evidence type="ECO:0000250" key="1"/>
<evidence type="ECO:0000250" key="2">
    <source>
        <dbReference type="UniProtKB" id="P21581"/>
    </source>
</evidence>
<evidence type="ECO:0000250" key="3">
    <source>
        <dbReference type="UniProtKB" id="P21583"/>
    </source>
</evidence>
<evidence type="ECO:0000255" key="4"/>
<evidence type="ECO:0000305" key="5"/>
<gene>
    <name type="primary">KITLG</name>
    <name type="synonym">SCF</name>
</gene>
<proteinExistence type="evidence at transcript level"/>
<name>SCF_SHEEP</name>
<keyword id="KW-0130">Cell adhesion</keyword>
<keyword id="KW-1003">Cell membrane</keyword>
<keyword id="KW-0966">Cell projection</keyword>
<keyword id="KW-0963">Cytoplasm</keyword>
<keyword id="KW-0206">Cytoskeleton</keyword>
<keyword id="KW-1015">Disulfide bond</keyword>
<keyword id="KW-0325">Glycoprotein</keyword>
<keyword id="KW-0339">Growth factor</keyword>
<keyword id="KW-0472">Membrane</keyword>
<keyword id="KW-0873">Pyrrolidone carboxylic acid</keyword>
<keyword id="KW-1185">Reference proteome</keyword>
<keyword id="KW-0964">Secreted</keyword>
<keyword id="KW-0732">Signal</keyword>
<keyword id="KW-0812">Transmembrane</keyword>
<keyword id="KW-1133">Transmembrane helix</keyword>
<reference key="1">
    <citation type="journal article" date="1996" name="Mamm. Genome">
        <title>Ovine stem cell factor gene is located within a syntenic group on chromosome 3 conserved across mammalian species.</title>
        <authorList>
            <person name="Tisdall D.J."/>
            <person name="Quirke L.D."/>
            <person name="Galloway S.M."/>
        </authorList>
    </citation>
    <scope>NUCLEOTIDE SEQUENCE [MRNA] OF 8-267</scope>
    <source>
        <tissue>Ovarian follicle</tissue>
    </source>
</reference>
<reference key="2">
    <citation type="journal article" date="1999" name="Cytokine">
        <title>The cloning and expression of the cDNA for ovine stem cell factor (kit-ligand) and characterization of its in vitro haematopoietic activity.</title>
        <authorList>
            <person name="McInnes C.J."/>
            <person name="Deane D."/>
            <person name="Thomson J."/>
            <person name="Broad A."/>
            <person name="Haig D.M."/>
        </authorList>
    </citation>
    <scope>NUCLEOTIDE SEQUENCE [MRNA] OF 1-202</scope>
</reference>